<comment type="similarity">
    <text evidence="1">Belongs to the gamma-glutamylcyclotransferase family.</text>
</comment>
<comment type="caution">
    <text evidence="1">Lacks the conserved Glu residue at position 70 that serves as proton acceptor in enzymes with gamma-glutamylcyclotransferase activity.</text>
</comment>
<gene>
    <name type="primary">ytfP</name>
    <name type="ordered locus">c5320</name>
</gene>
<name>YTFP_ECOL6</name>
<evidence type="ECO:0000305" key="1"/>
<proteinExistence type="inferred from homology"/>
<feature type="chain" id="PRO_0000184791" description="Gamma-glutamylcyclotransferase family protein YtfP">
    <location>
        <begin position="1"/>
        <end position="113"/>
    </location>
</feature>
<reference key="1">
    <citation type="journal article" date="2002" name="Proc. Natl. Acad. Sci. U.S.A.">
        <title>Extensive mosaic structure revealed by the complete genome sequence of uropathogenic Escherichia coli.</title>
        <authorList>
            <person name="Welch R.A."/>
            <person name="Burland V."/>
            <person name="Plunkett G. III"/>
            <person name="Redford P."/>
            <person name="Roesch P."/>
            <person name="Rasko D."/>
            <person name="Buckles E.L."/>
            <person name="Liou S.-R."/>
            <person name="Boutin A."/>
            <person name="Hackett J."/>
            <person name="Stroud D."/>
            <person name="Mayhew G.F."/>
            <person name="Rose D.J."/>
            <person name="Zhou S."/>
            <person name="Schwartz D.C."/>
            <person name="Perna N.T."/>
            <person name="Mobley H.L.T."/>
            <person name="Donnenberg M.S."/>
            <person name="Blattner F.R."/>
        </authorList>
    </citation>
    <scope>NUCLEOTIDE SEQUENCE [LARGE SCALE GENOMIC DNA]</scope>
    <source>
        <strain>CFT073 / ATCC 700928 / UPEC</strain>
    </source>
</reference>
<dbReference type="EMBL" id="AE014075">
    <property type="protein sequence ID" value="AAN83741.1"/>
    <property type="molecule type" value="Genomic_DNA"/>
</dbReference>
<dbReference type="RefSeq" id="WP_001219160.1">
    <property type="nucleotide sequence ID" value="NZ_CP051263.1"/>
</dbReference>
<dbReference type="BMRB" id="P0AE49"/>
<dbReference type="SMR" id="P0AE49"/>
<dbReference type="STRING" id="199310.c5320"/>
<dbReference type="KEGG" id="ecc:c5320"/>
<dbReference type="eggNOG" id="COG2105">
    <property type="taxonomic scope" value="Bacteria"/>
</dbReference>
<dbReference type="HOGENOM" id="CLU_083466_5_2_6"/>
<dbReference type="BioCyc" id="ECOL199310:C5320-MONOMER"/>
<dbReference type="Proteomes" id="UP000001410">
    <property type="component" value="Chromosome"/>
</dbReference>
<dbReference type="GO" id="GO:0005829">
    <property type="term" value="C:cytosol"/>
    <property type="evidence" value="ECO:0007669"/>
    <property type="project" value="TreeGrafter"/>
</dbReference>
<dbReference type="GO" id="GO:0061929">
    <property type="term" value="F:gamma-glutamylaminecyclotransferase activity"/>
    <property type="evidence" value="ECO:0007669"/>
    <property type="project" value="InterPro"/>
</dbReference>
<dbReference type="CDD" id="cd06661">
    <property type="entry name" value="GGCT_like"/>
    <property type="match status" value="1"/>
</dbReference>
<dbReference type="FunFam" id="3.10.490.10:FF:000001">
    <property type="entry name" value="Gamma-glutamylcyclotransferase ytfP"/>
    <property type="match status" value="1"/>
</dbReference>
<dbReference type="Gene3D" id="3.10.490.10">
    <property type="entry name" value="Gamma-glutamyl cyclotransferase-like"/>
    <property type="match status" value="1"/>
</dbReference>
<dbReference type="InterPro" id="IPR009288">
    <property type="entry name" value="AIG2-like_dom"/>
</dbReference>
<dbReference type="InterPro" id="IPR039126">
    <property type="entry name" value="GGACT"/>
</dbReference>
<dbReference type="InterPro" id="IPR013024">
    <property type="entry name" value="GGCT-like"/>
</dbReference>
<dbReference type="InterPro" id="IPR036568">
    <property type="entry name" value="GGCT-like_sf"/>
</dbReference>
<dbReference type="PANTHER" id="PTHR12510:SF4">
    <property type="entry name" value="GAMMA-GLUTAMYLAMINECYCLOTRANSFERASE"/>
    <property type="match status" value="1"/>
</dbReference>
<dbReference type="PANTHER" id="PTHR12510">
    <property type="entry name" value="TROPONIN C-AKIN-1 PROTEIN"/>
    <property type="match status" value="1"/>
</dbReference>
<dbReference type="Pfam" id="PF06094">
    <property type="entry name" value="GGACT"/>
    <property type="match status" value="1"/>
</dbReference>
<dbReference type="SUPFAM" id="SSF110857">
    <property type="entry name" value="Gamma-glutamyl cyclotransferase-like"/>
    <property type="match status" value="1"/>
</dbReference>
<keyword id="KW-1185">Reference proteome</keyword>
<protein>
    <recommendedName>
        <fullName>Gamma-glutamylcyclotransferase family protein YtfP</fullName>
    </recommendedName>
</protein>
<sequence>MRIFVYGSLRHKQGNSHWMTNAQLLGDFSIDNYQLYSLGHYPGAVPGNGTVHGEVYRIDNATLAELDALRTRGGEYARQLIQTPYGSAWMYVYQRPVDGLKLIESGDWLDRDK</sequence>
<organism>
    <name type="scientific">Escherichia coli O6:H1 (strain CFT073 / ATCC 700928 / UPEC)</name>
    <dbReference type="NCBI Taxonomy" id="199310"/>
    <lineage>
        <taxon>Bacteria</taxon>
        <taxon>Pseudomonadati</taxon>
        <taxon>Pseudomonadota</taxon>
        <taxon>Gammaproteobacteria</taxon>
        <taxon>Enterobacterales</taxon>
        <taxon>Enterobacteriaceae</taxon>
        <taxon>Escherichia</taxon>
    </lineage>
</organism>
<accession>P0AE49</accession>
<accession>P39323</accession>